<feature type="chain" id="PRO_0000171212" description="Serine/threonine-protein kinase PknF">
    <location>
        <begin position="1"/>
        <end position="476"/>
    </location>
</feature>
<feature type="domain" description="Protein kinase" evidence="2">
    <location>
        <begin position="12"/>
        <end position="279"/>
    </location>
</feature>
<feature type="region of interest" description="Disordered" evidence="4">
    <location>
        <begin position="332"/>
        <end position="376"/>
    </location>
</feature>
<feature type="compositionally biased region" description="Low complexity" evidence="4">
    <location>
        <begin position="338"/>
        <end position="376"/>
    </location>
</feature>
<feature type="active site" description="Proton acceptor" evidence="2 3">
    <location>
        <position position="137"/>
    </location>
</feature>
<feature type="binding site" evidence="2">
    <location>
        <begin position="18"/>
        <end position="26"/>
    </location>
    <ligand>
        <name>ATP</name>
        <dbReference type="ChEBI" id="CHEBI:30616"/>
    </ligand>
</feature>
<feature type="binding site" evidence="2">
    <location>
        <position position="41"/>
    </location>
    <ligand>
        <name>ATP</name>
        <dbReference type="ChEBI" id="CHEBI:30616"/>
    </ligand>
</feature>
<feature type="modified residue" description="Phosphothreonine; by autocatalysis" evidence="1">
    <location>
        <position position="8"/>
    </location>
</feature>
<feature type="modified residue" description="Phosphothreonine; by autocatalysis" evidence="1">
    <location>
        <position position="13"/>
    </location>
</feature>
<feature type="modified residue" description="Phosphothreonine; by autocatalysis" evidence="1">
    <location>
        <position position="173"/>
    </location>
</feature>
<feature type="modified residue" description="Phosphothreonine; by autocatalysis" evidence="1">
    <location>
        <position position="175"/>
    </location>
</feature>
<feature type="modified residue" description="Phosphothreonine; by autocatalysis" evidence="1">
    <location>
        <position position="287"/>
    </location>
</feature>
<feature type="modified residue" description="Phosphoserine; by autocatalysis" evidence="1">
    <location>
        <position position="290"/>
    </location>
</feature>
<name>PKNF_MYCBO</name>
<comment type="catalytic activity">
    <reaction>
        <text>L-seryl-[protein] + ATP = O-phospho-L-seryl-[protein] + ADP + H(+)</text>
        <dbReference type="Rhea" id="RHEA:17989"/>
        <dbReference type="Rhea" id="RHEA-COMP:9863"/>
        <dbReference type="Rhea" id="RHEA-COMP:11604"/>
        <dbReference type="ChEBI" id="CHEBI:15378"/>
        <dbReference type="ChEBI" id="CHEBI:29999"/>
        <dbReference type="ChEBI" id="CHEBI:30616"/>
        <dbReference type="ChEBI" id="CHEBI:83421"/>
        <dbReference type="ChEBI" id="CHEBI:456216"/>
        <dbReference type="EC" id="2.7.11.1"/>
    </reaction>
</comment>
<comment type="catalytic activity">
    <reaction>
        <text>L-threonyl-[protein] + ATP = O-phospho-L-threonyl-[protein] + ADP + H(+)</text>
        <dbReference type="Rhea" id="RHEA:46608"/>
        <dbReference type="Rhea" id="RHEA-COMP:11060"/>
        <dbReference type="Rhea" id="RHEA-COMP:11605"/>
        <dbReference type="ChEBI" id="CHEBI:15378"/>
        <dbReference type="ChEBI" id="CHEBI:30013"/>
        <dbReference type="ChEBI" id="CHEBI:30616"/>
        <dbReference type="ChEBI" id="CHEBI:61977"/>
        <dbReference type="ChEBI" id="CHEBI:456216"/>
        <dbReference type="EC" id="2.7.11.1"/>
    </reaction>
</comment>
<comment type="PTM">
    <text evidence="1">Dephosphorylated by PstP.</text>
</comment>
<comment type="similarity">
    <text evidence="2">Belongs to the protein kinase superfamily. Ser/Thr protein kinase family.</text>
</comment>
<protein>
    <recommendedName>
        <fullName>Serine/threonine-protein kinase PknF</fullName>
        <ecNumber>2.7.11.1</ecNumber>
    </recommendedName>
</protein>
<dbReference type="EC" id="2.7.11.1"/>
<dbReference type="EMBL" id="LT708304">
    <property type="protein sequence ID" value="SIU00378.1"/>
    <property type="molecule type" value="Genomic_DNA"/>
</dbReference>
<dbReference type="RefSeq" id="NP_855427.1">
    <property type="nucleotide sequence ID" value="NC_002945.3"/>
</dbReference>
<dbReference type="RefSeq" id="WP_010950588.1">
    <property type="nucleotide sequence ID" value="NC_002945.4"/>
</dbReference>
<dbReference type="SMR" id="Q7TZN1"/>
<dbReference type="KEGG" id="mbo:BQ2027_MB1775"/>
<dbReference type="PATRIC" id="fig|233413.5.peg.1939"/>
<dbReference type="Proteomes" id="UP000001419">
    <property type="component" value="Chromosome"/>
</dbReference>
<dbReference type="GO" id="GO:0005524">
    <property type="term" value="F:ATP binding"/>
    <property type="evidence" value="ECO:0007669"/>
    <property type="project" value="UniProtKB-KW"/>
</dbReference>
<dbReference type="GO" id="GO:0106310">
    <property type="term" value="F:protein serine kinase activity"/>
    <property type="evidence" value="ECO:0007669"/>
    <property type="project" value="RHEA"/>
</dbReference>
<dbReference type="GO" id="GO:0004674">
    <property type="term" value="F:protein serine/threonine kinase activity"/>
    <property type="evidence" value="ECO:0007669"/>
    <property type="project" value="UniProtKB-KW"/>
</dbReference>
<dbReference type="GO" id="GO:0080090">
    <property type="term" value="P:regulation of primary metabolic process"/>
    <property type="evidence" value="ECO:0007669"/>
    <property type="project" value="UniProtKB-ARBA"/>
</dbReference>
<dbReference type="CDD" id="cd14014">
    <property type="entry name" value="STKc_PknB_like"/>
    <property type="match status" value="1"/>
</dbReference>
<dbReference type="FunFam" id="1.10.510.10:FF:000998">
    <property type="entry name" value="Anchored-membrane serine/threonine-protein kinase pknF"/>
    <property type="match status" value="1"/>
</dbReference>
<dbReference type="FunFam" id="3.30.200.20:FF:000035">
    <property type="entry name" value="Serine/threonine protein kinase Stk1"/>
    <property type="match status" value="1"/>
</dbReference>
<dbReference type="Gene3D" id="3.30.200.20">
    <property type="entry name" value="Phosphorylase Kinase, domain 1"/>
    <property type="match status" value="1"/>
</dbReference>
<dbReference type="Gene3D" id="1.10.510.10">
    <property type="entry name" value="Transferase(Phosphotransferase) domain 1"/>
    <property type="match status" value="1"/>
</dbReference>
<dbReference type="InterPro" id="IPR011009">
    <property type="entry name" value="Kinase-like_dom_sf"/>
</dbReference>
<dbReference type="InterPro" id="IPR000719">
    <property type="entry name" value="Prot_kinase_dom"/>
</dbReference>
<dbReference type="InterPro" id="IPR008271">
    <property type="entry name" value="Ser/Thr_kinase_AS"/>
</dbReference>
<dbReference type="PANTHER" id="PTHR43289">
    <property type="entry name" value="MITOGEN-ACTIVATED PROTEIN KINASE KINASE KINASE 20-RELATED"/>
    <property type="match status" value="1"/>
</dbReference>
<dbReference type="PANTHER" id="PTHR43289:SF6">
    <property type="entry name" value="SERINE_THREONINE-PROTEIN KINASE NEKL-3"/>
    <property type="match status" value="1"/>
</dbReference>
<dbReference type="Pfam" id="PF00069">
    <property type="entry name" value="Pkinase"/>
    <property type="match status" value="1"/>
</dbReference>
<dbReference type="SMART" id="SM00220">
    <property type="entry name" value="S_TKc"/>
    <property type="match status" value="1"/>
</dbReference>
<dbReference type="SUPFAM" id="SSF56112">
    <property type="entry name" value="Protein kinase-like (PK-like)"/>
    <property type="match status" value="1"/>
</dbReference>
<dbReference type="PROSITE" id="PS50011">
    <property type="entry name" value="PROTEIN_KINASE_DOM"/>
    <property type="match status" value="1"/>
</dbReference>
<dbReference type="PROSITE" id="PS00108">
    <property type="entry name" value="PROTEIN_KINASE_ST"/>
    <property type="match status" value="1"/>
</dbReference>
<sequence length="476" mass="50698">MPLAEGSTFAGFTIVRQLGSGGMGEVYLARHPRLPRQDALKVLRADVSADGEYRARFNREADAAASLWHPHIVAVHDRGEFDGQLWIDMDFVDGTDTVSLLRDRYPNGMPGPEVTEIITAVAEALDYAHERRLLHRDVKPANILIANPDSPDRRIMLADFGIAGWVDDPSGLTATNMTVGTVSYAAPEQLMGNELDGRADQYALAATAFHLLTGSPPFQHANPAVVISQHLSASPPAIGDRVPELTPLDPVFAKALAKQPKDRYQRCVDFARALGHRLGGAGDPDDTRVSQPVAVAAPAKRSLLRTAVIVPAVLAMLLVMAVAVTVREFQRADDERAAQPARTRTTTSAGTTTSVAPASTTRPAPTTPTTTGAADTATASPTAAVVAIGALCFPLGSTGTTKTGATAYCSTLQGTNTTIWSLTEDTVASPTVTATADPTEAPLPIEQESPIRVCMQQTGQTRRECREEIRRSNGWP</sequence>
<keyword id="KW-0067">ATP-binding</keyword>
<keyword id="KW-0418">Kinase</keyword>
<keyword id="KW-0547">Nucleotide-binding</keyword>
<keyword id="KW-0597">Phosphoprotein</keyword>
<keyword id="KW-1185">Reference proteome</keyword>
<keyword id="KW-0723">Serine/threonine-protein kinase</keyword>
<keyword id="KW-0808">Transferase</keyword>
<proteinExistence type="inferred from homology"/>
<reference key="1">
    <citation type="journal article" date="2003" name="Proc. Natl. Acad. Sci. U.S.A.">
        <title>The complete genome sequence of Mycobacterium bovis.</title>
        <authorList>
            <person name="Garnier T."/>
            <person name="Eiglmeier K."/>
            <person name="Camus J.-C."/>
            <person name="Medina N."/>
            <person name="Mansoor H."/>
            <person name="Pryor M."/>
            <person name="Duthoy S."/>
            <person name="Grondin S."/>
            <person name="Lacroix C."/>
            <person name="Monsempe C."/>
            <person name="Simon S."/>
            <person name="Harris B."/>
            <person name="Atkin R."/>
            <person name="Doggett J."/>
            <person name="Mayes R."/>
            <person name="Keating L."/>
            <person name="Wheeler P.R."/>
            <person name="Parkhill J."/>
            <person name="Barrell B.G."/>
            <person name="Cole S.T."/>
            <person name="Gordon S.V."/>
            <person name="Hewinson R.G."/>
        </authorList>
    </citation>
    <scope>NUCLEOTIDE SEQUENCE [LARGE SCALE GENOMIC DNA]</scope>
    <source>
        <strain>ATCC BAA-935 / AF2122/97</strain>
    </source>
</reference>
<reference key="2">
    <citation type="journal article" date="2017" name="Genome Announc.">
        <title>Updated reference genome sequence and annotation of Mycobacterium bovis AF2122/97.</title>
        <authorList>
            <person name="Malone K.M."/>
            <person name="Farrell D."/>
            <person name="Stuber T.P."/>
            <person name="Schubert O.T."/>
            <person name="Aebersold R."/>
            <person name="Robbe-Austerman S."/>
            <person name="Gordon S.V."/>
        </authorList>
    </citation>
    <scope>NUCLEOTIDE SEQUENCE [LARGE SCALE GENOMIC DNA]</scope>
    <scope>GENOME REANNOTATION</scope>
    <source>
        <strain>ATCC BAA-935 / AF2122/97</strain>
    </source>
</reference>
<evidence type="ECO:0000250" key="1"/>
<evidence type="ECO:0000255" key="2">
    <source>
        <dbReference type="PROSITE-ProRule" id="PRU00159"/>
    </source>
</evidence>
<evidence type="ECO:0000255" key="3">
    <source>
        <dbReference type="PROSITE-ProRule" id="PRU10027"/>
    </source>
</evidence>
<evidence type="ECO:0000256" key="4">
    <source>
        <dbReference type="SAM" id="MobiDB-lite"/>
    </source>
</evidence>
<accession>Q7TZN1</accession>
<accession>A0A1R3XZ88</accession>
<accession>X2BJ00</accession>
<gene>
    <name type="primary">pknF</name>
    <name type="ordered locus">BQ2027_MB1775</name>
</gene>
<organism>
    <name type="scientific">Mycobacterium bovis (strain ATCC BAA-935 / AF2122/97)</name>
    <dbReference type="NCBI Taxonomy" id="233413"/>
    <lineage>
        <taxon>Bacteria</taxon>
        <taxon>Bacillati</taxon>
        <taxon>Actinomycetota</taxon>
        <taxon>Actinomycetes</taxon>
        <taxon>Mycobacteriales</taxon>
        <taxon>Mycobacteriaceae</taxon>
        <taxon>Mycobacterium</taxon>
        <taxon>Mycobacterium tuberculosis complex</taxon>
    </lineage>
</organism>